<protein>
    <recommendedName>
        <fullName>B3 domain-containing protein REM1</fullName>
    </recommendedName>
    <alternativeName>
        <fullName>Protein REPRODUCTIVE MERISTEM 1</fullName>
        <shortName>BoREM1</shortName>
    </alternativeName>
</protein>
<dbReference type="EMBL" id="AF051772">
    <property type="protein sequence ID" value="AAC18082.1"/>
    <property type="molecule type" value="mRNA"/>
</dbReference>
<dbReference type="PIR" id="T14433">
    <property type="entry name" value="T14433"/>
</dbReference>
<dbReference type="SMR" id="O65098"/>
<dbReference type="GO" id="GO:0005634">
    <property type="term" value="C:nucleus"/>
    <property type="evidence" value="ECO:0000250"/>
    <property type="project" value="UniProtKB"/>
</dbReference>
<dbReference type="GO" id="GO:0003677">
    <property type="term" value="F:DNA binding"/>
    <property type="evidence" value="ECO:0007669"/>
    <property type="project" value="UniProtKB-KW"/>
</dbReference>
<dbReference type="GO" id="GO:0009908">
    <property type="term" value="P:flower development"/>
    <property type="evidence" value="ECO:0000250"/>
    <property type="project" value="UniProtKB"/>
</dbReference>
<dbReference type="CDD" id="cd10017">
    <property type="entry name" value="B3_DNA"/>
    <property type="match status" value="3"/>
</dbReference>
<dbReference type="FunFam" id="2.40.330.10:FF:000010">
    <property type="entry name" value="B3 domain-containing protein REM1"/>
    <property type="match status" value="2"/>
</dbReference>
<dbReference type="FunFam" id="2.40.330.10:FF:000009">
    <property type="entry name" value="Transcriptional factor B3 family protein"/>
    <property type="match status" value="1"/>
</dbReference>
<dbReference type="Gene3D" id="2.40.330.10">
    <property type="entry name" value="DNA-binding pseudobarrel domain"/>
    <property type="match status" value="3"/>
</dbReference>
<dbReference type="InterPro" id="IPR003340">
    <property type="entry name" value="B3_DNA-bd"/>
</dbReference>
<dbReference type="InterPro" id="IPR015300">
    <property type="entry name" value="DNA-bd_pseudobarrel_sf"/>
</dbReference>
<dbReference type="InterPro" id="IPR039218">
    <property type="entry name" value="REM_fam"/>
</dbReference>
<dbReference type="PANTHER" id="PTHR31674">
    <property type="entry name" value="B3 DOMAIN-CONTAINING PROTEIN REM-LIKE 3-RELATED"/>
    <property type="match status" value="1"/>
</dbReference>
<dbReference type="PANTHER" id="PTHR31674:SF62">
    <property type="entry name" value="B3 DOMAIN-CONTAINING PROTEIN REM14-RELATED"/>
    <property type="match status" value="1"/>
</dbReference>
<dbReference type="Pfam" id="PF02362">
    <property type="entry name" value="B3"/>
    <property type="match status" value="2"/>
</dbReference>
<dbReference type="SMART" id="SM01019">
    <property type="entry name" value="B3"/>
    <property type="match status" value="3"/>
</dbReference>
<dbReference type="SUPFAM" id="SSF101936">
    <property type="entry name" value="DNA-binding pseudobarrel domain"/>
    <property type="match status" value="3"/>
</dbReference>
<dbReference type="PROSITE" id="PS50863">
    <property type="entry name" value="B3"/>
    <property type="match status" value="3"/>
</dbReference>
<keyword id="KW-0238">DNA-binding</keyword>
<keyword id="KW-0539">Nucleus</keyword>
<keyword id="KW-0677">Repeat</keyword>
<keyword id="KW-0804">Transcription</keyword>
<keyword id="KW-0805">Transcription regulation</keyword>
<comment type="function">
    <text evidence="1">May play a role in flower development.</text>
</comment>
<comment type="subcellular location">
    <subcellularLocation>
        <location evidence="2">Nucleus</location>
    </subcellularLocation>
</comment>
<comment type="tissue specificity">
    <text evidence="4">Specifically expressed in the reproductive meristem.</text>
</comment>
<accession>O65098</accession>
<evidence type="ECO:0000250" key="1"/>
<evidence type="ECO:0000255" key="2">
    <source>
        <dbReference type="PROSITE-ProRule" id="PRU00326"/>
    </source>
</evidence>
<evidence type="ECO:0000256" key="3">
    <source>
        <dbReference type="SAM" id="MobiDB-lite"/>
    </source>
</evidence>
<evidence type="ECO:0000269" key="4">
    <source>
    </source>
</evidence>
<feature type="chain" id="PRO_0000376937" description="B3 domain-containing protein REM1">
    <location>
        <begin position="1"/>
        <end position="497"/>
    </location>
</feature>
<feature type="DNA-binding region" description="TF-B3 1" evidence="2">
    <location>
        <begin position="7"/>
        <end position="92"/>
    </location>
</feature>
<feature type="DNA-binding region" description="TF-B3 2" evidence="2">
    <location>
        <begin position="142"/>
        <end position="239"/>
    </location>
</feature>
<feature type="DNA-binding region" description="TF-B3 3" evidence="2">
    <location>
        <begin position="278"/>
        <end position="379"/>
    </location>
</feature>
<feature type="region of interest" description="Disordered" evidence="3">
    <location>
        <begin position="87"/>
        <end position="135"/>
    </location>
</feature>
<feature type="compositionally biased region" description="Acidic residues" evidence="3">
    <location>
        <begin position="91"/>
        <end position="125"/>
    </location>
</feature>
<name>REM1_BRAOB</name>
<reference key="1">
    <citation type="journal article" date="1999" name="Plant Mol. Biol.">
        <title>Identification of genes specifically expressed in cauliflower reproductive meristems. Molecular characterization of BoREM1.</title>
        <authorList>
            <person name="Franco-Zorrilla J.M."/>
            <person name="Fernandez-Calvin B."/>
            <person name="Madueno F."/>
            <person name="Cruz-Alvarez M."/>
            <person name="Salinas J."/>
            <person name="Martinez-Zapater J.M."/>
        </authorList>
    </citation>
    <scope>NUCLEOTIDE SEQUENCE [MRNA]</scope>
    <scope>TISSUE SPECIFICITY</scope>
</reference>
<organism>
    <name type="scientific">Brassica oleracea var. botrytis</name>
    <name type="common">Cauliflower</name>
    <dbReference type="NCBI Taxonomy" id="3715"/>
    <lineage>
        <taxon>Eukaryota</taxon>
        <taxon>Viridiplantae</taxon>
        <taxon>Streptophyta</taxon>
        <taxon>Embryophyta</taxon>
        <taxon>Tracheophyta</taxon>
        <taxon>Spermatophyta</taxon>
        <taxon>Magnoliopsida</taxon>
        <taxon>eudicotyledons</taxon>
        <taxon>Gunneridae</taxon>
        <taxon>Pentapetalae</taxon>
        <taxon>rosids</taxon>
        <taxon>malvids</taxon>
        <taxon>Brassicales</taxon>
        <taxon>Brassicaceae</taxon>
        <taxon>Brassiceae</taxon>
        <taxon>Brassica</taxon>
    </lineage>
</organism>
<sequence length="497" mass="55533">MVPPPQPSLFQLTFLTGDKPILTLDDEFISSHTKVLLISDASDKIWEVKLDGNRLAGGWEEFAAVNNFSEGNVLVFRHNGEEIFHVAVSSESDDDESDDTDDSESDDESNDTDDSESDDSEDNGEGDSSLVNKEADSSSDCFLRARVTPYSLTKDRLDLSKDFKFMLFDEHNKPCEIYLVNEKGRKWTLRLSRNISSGAFYITRGWANFCSANGLIRGDFCYFKLSESGERPVLLLCSHESGNGHEDKEEEEECPEADTLKICSVGGCSNEKNTPSRFLTQKFTPSRFKTGQLYISMLSSGGLRESGIKKTGEIILLDNDGRKWPSYLNKTGQPGGEWCYIRKGWREMCEANGVEVNDSFVLELICEAANPIFKLHSKIRNKGKGNIVTSKKRALHARTVERTPGVEIDGERGSKRGCTRVSNRSNTYLKGKQPESCSVSDQVANVRQSVLDTLNTIRHFKAELKTRERNLEASLLELDALGERILGISKILNNNLA</sequence>
<gene>
    <name type="primary">REM1</name>
</gene>
<proteinExistence type="evidence at transcript level"/>